<proteinExistence type="evidence at protein level"/>
<reference key="1">
    <citation type="journal article" date="2004" name="Microbiology">
        <title>Regulation of catabolic enzymes during long-term exposure of Delftia acidovorans MC1 to chlorophenoxy herbicides.</title>
        <authorList>
            <person name="Benndorf D."/>
            <person name="Davidson I."/>
            <person name="Babel W."/>
        </authorList>
    </citation>
    <scope>PROTEIN SEQUENCE</scope>
    <source>
        <strain>MC1</strain>
    </source>
</reference>
<reference key="2">
    <citation type="journal article" date="1992" name="Mol. Microbiol.">
        <title>GroEL proteins from three Pseudomonas species.</title>
        <authorList>
            <person name="Fowell S.L."/>
            <person name="Lilley K.S."/>
            <person name="Jones D."/>
            <person name="Maxwell A."/>
        </authorList>
    </citation>
    <scope>PROTEIN SEQUENCE OF 1-15</scope>
    <source>
        <strain>PHB13.21</strain>
    </source>
</reference>
<name>CH60_DELAC</name>
<dbReference type="EC" id="5.6.1.7" evidence="1"/>
<dbReference type="PIR" id="S11805">
    <property type="entry name" value="S11805"/>
</dbReference>
<dbReference type="SMR" id="Q9R5K5"/>
<dbReference type="GO" id="GO:0005737">
    <property type="term" value="C:cytoplasm"/>
    <property type="evidence" value="ECO:0007669"/>
    <property type="project" value="UniProtKB-SubCell"/>
</dbReference>
<dbReference type="GO" id="GO:0005524">
    <property type="term" value="F:ATP binding"/>
    <property type="evidence" value="ECO:0007669"/>
    <property type="project" value="UniProtKB-KW"/>
</dbReference>
<dbReference type="GO" id="GO:0016853">
    <property type="term" value="F:isomerase activity"/>
    <property type="evidence" value="ECO:0007669"/>
    <property type="project" value="UniProtKB-KW"/>
</dbReference>
<accession>Q9R5K5</accession>
<keyword id="KW-0067">ATP-binding</keyword>
<keyword id="KW-0143">Chaperone</keyword>
<keyword id="KW-0963">Cytoplasm</keyword>
<keyword id="KW-0903">Direct protein sequencing</keyword>
<keyword id="KW-0413">Isomerase</keyword>
<keyword id="KW-0547">Nucleotide-binding</keyword>
<evidence type="ECO:0000255" key="1">
    <source>
        <dbReference type="HAMAP-Rule" id="MF_00600"/>
    </source>
</evidence>
<evidence type="ECO:0000305" key="2"/>
<comment type="function">
    <text evidence="1">Together with its co-chaperonin GroES, plays an essential role in assisting protein folding. The GroEL-GroES system forms a nano-cage that allows encapsulation of the non-native substrate proteins and provides a physical environment optimized to promote and accelerate protein folding.</text>
</comment>
<comment type="catalytic activity">
    <reaction evidence="1">
        <text>ATP + H2O + a folded polypeptide = ADP + phosphate + an unfolded polypeptide.</text>
        <dbReference type="EC" id="5.6.1.7"/>
    </reaction>
</comment>
<comment type="subunit">
    <text evidence="1">Forms a cylinder of 14 subunits composed of two heptameric rings stacked back-to-back. Interacts with the co-chaperonin GroES.</text>
</comment>
<comment type="subcellular location">
    <subcellularLocation>
        <location evidence="1">Cytoplasm</location>
    </subcellularLocation>
</comment>
<comment type="similarity">
    <text evidence="1 2">Belongs to the chaperonin (HSP60) family.</text>
</comment>
<feature type="chain" id="PRO_0000063346" description="Chaperonin GroEL">
    <location>
        <begin position="1"/>
        <end position="25" status="greater than"/>
    </location>
</feature>
<feature type="sequence conflict" description="In Ref. 2; AA sequence." evidence="2" ref="2">
    <original>H</original>
    <variation>A</variation>
    <location>
        <position position="1"/>
    </location>
</feature>
<feature type="non-terminal residue">
    <location>
        <position position="25"/>
    </location>
</feature>
<protein>
    <recommendedName>
        <fullName evidence="1">Chaperonin GroEL</fullName>
        <ecNumber evidence="1">5.6.1.7</ecNumber>
    </recommendedName>
    <alternativeName>
        <fullName evidence="1">60 kDa chaperonin</fullName>
    </alternativeName>
    <alternativeName>
        <fullName evidence="1">Chaperonin-60</fullName>
        <shortName evidence="1">Cpn60</shortName>
    </alternativeName>
</protein>
<organism>
    <name type="scientific">Delftia acidovorans</name>
    <name type="common">Pseudomonas acidovorans</name>
    <name type="synonym">Comamonas acidovorans</name>
    <dbReference type="NCBI Taxonomy" id="80866"/>
    <lineage>
        <taxon>Bacteria</taxon>
        <taxon>Pseudomonadati</taxon>
        <taxon>Pseudomonadota</taxon>
        <taxon>Betaproteobacteria</taxon>
        <taxon>Burkholderiales</taxon>
        <taxon>Comamonadaceae</taxon>
        <taxon>Delftia</taxon>
    </lineage>
</organism>
<sequence length="25" mass="2625">HAKDVVFGGEARARMVEGVNILANA</sequence>
<gene>
    <name evidence="1" type="primary">groEL</name>
    <name evidence="1" type="synonym">groL</name>
</gene>